<dbReference type="EMBL" id="CP000247">
    <property type="protein sequence ID" value="ABG69735.1"/>
    <property type="molecule type" value="Genomic_DNA"/>
</dbReference>
<dbReference type="RefSeq" id="WP_000219700.1">
    <property type="nucleotide sequence ID" value="NC_008253.1"/>
</dbReference>
<dbReference type="SMR" id="Q0TH44"/>
<dbReference type="KEGG" id="ecp:ECP_1732"/>
<dbReference type="HOGENOM" id="CLU_049702_0_0_6"/>
<dbReference type="Proteomes" id="UP000009182">
    <property type="component" value="Chromosome"/>
</dbReference>
<dbReference type="HAMAP" id="MF_01232">
    <property type="entry name" value="UPF0229"/>
    <property type="match status" value="1"/>
</dbReference>
<dbReference type="InterPro" id="IPR006698">
    <property type="entry name" value="UPF0229"/>
</dbReference>
<dbReference type="NCBIfam" id="NF003707">
    <property type="entry name" value="PRK05325.1-2"/>
    <property type="match status" value="1"/>
</dbReference>
<dbReference type="NCBIfam" id="NF003708">
    <property type="entry name" value="PRK05325.1-3"/>
    <property type="match status" value="1"/>
</dbReference>
<dbReference type="PANTHER" id="PTHR30510">
    <property type="entry name" value="UPF0229 PROTEIN YEAH"/>
    <property type="match status" value="1"/>
</dbReference>
<dbReference type="PANTHER" id="PTHR30510:SF2">
    <property type="entry name" value="UPF0229 PROTEIN YEAH"/>
    <property type="match status" value="1"/>
</dbReference>
<dbReference type="Pfam" id="PF04285">
    <property type="entry name" value="DUF444"/>
    <property type="match status" value="1"/>
</dbReference>
<organism>
    <name type="scientific">Escherichia coli O6:K15:H31 (strain 536 / UPEC)</name>
    <dbReference type="NCBI Taxonomy" id="362663"/>
    <lineage>
        <taxon>Bacteria</taxon>
        <taxon>Pseudomonadati</taxon>
        <taxon>Pseudomonadota</taxon>
        <taxon>Gammaproteobacteria</taxon>
        <taxon>Enterobacterales</taxon>
        <taxon>Enterobacteriaceae</taxon>
        <taxon>Escherichia</taxon>
    </lineage>
</organism>
<reference key="1">
    <citation type="journal article" date="2006" name="Mol. Microbiol.">
        <title>Role of pathogenicity island-associated integrases in the genome plasticity of uropathogenic Escherichia coli strain 536.</title>
        <authorList>
            <person name="Hochhut B."/>
            <person name="Wilde C."/>
            <person name="Balling G."/>
            <person name="Middendorf B."/>
            <person name="Dobrindt U."/>
            <person name="Brzuszkiewicz E."/>
            <person name="Gottschalk G."/>
            <person name="Carniel E."/>
            <person name="Hacker J."/>
        </authorList>
    </citation>
    <scope>NUCLEOTIDE SEQUENCE [LARGE SCALE GENOMIC DNA]</scope>
    <source>
        <strain>536 / UPEC</strain>
    </source>
</reference>
<name>YEAH_ECOL5</name>
<sequence>MTWFIDRRLNGKNKSMVNRQRFLRRYKAQIKQSISEAINKRSVTDVDSGESVSIPTEDISEPMFHQGRGGLRHRVHPGNDHFVQNDRIERSQGGGGGSGSGQGQASQDGEGQDEFVFQISKDEYLDLLFEDLALPNLKQNQQRQLTEYKTHRAGYTANGVPANISVVRSLQNSLARRTAMTAGKRRELHALEENLAIISNSEPAQLLEEERLRKEIAELRAKIERVPFIDTFDLRYKNYEKRPDPSSQAVMFCLMDVSGSMDQSTKDMAKRFYILLYLFLSRTYKNVEVVYIRHHTQAKEVDEHEFFYSQETGGTIVSSALKLMDEVVKERYNPAQWNIYAAQASDGDNWADDSPLCHEILAKKLLPVVRYYSYIEITRRAHQTLWREYEHLQSTFDNFAMQHIRDQDDIYPVFRELFHKQNATAKD</sequence>
<protein>
    <recommendedName>
        <fullName evidence="1">UPF0229 protein YeaH</fullName>
    </recommendedName>
</protein>
<accession>Q0TH44</accession>
<comment type="similarity">
    <text evidence="1">Belongs to the UPF0229 family.</text>
</comment>
<evidence type="ECO:0000255" key="1">
    <source>
        <dbReference type="HAMAP-Rule" id="MF_01232"/>
    </source>
</evidence>
<evidence type="ECO:0000256" key="2">
    <source>
        <dbReference type="SAM" id="MobiDB-lite"/>
    </source>
</evidence>
<proteinExistence type="inferred from homology"/>
<feature type="chain" id="PRO_1000066857" description="UPF0229 protein YeaH">
    <location>
        <begin position="1"/>
        <end position="427"/>
    </location>
</feature>
<feature type="region of interest" description="Disordered" evidence="2">
    <location>
        <begin position="87"/>
        <end position="110"/>
    </location>
</feature>
<feature type="compositionally biased region" description="Gly residues" evidence="2">
    <location>
        <begin position="92"/>
        <end position="102"/>
    </location>
</feature>
<gene>
    <name evidence="1" type="primary">yeaH</name>
    <name type="ordered locus">ECP_1732</name>
</gene>